<name>TGT_PHOPR</name>
<protein>
    <recommendedName>
        <fullName evidence="1">Queuine tRNA-ribosyltransferase</fullName>
        <ecNumber evidence="1">2.4.2.29</ecNumber>
    </recommendedName>
    <alternativeName>
        <fullName evidence="1">Guanine insertion enzyme</fullName>
    </alternativeName>
    <alternativeName>
        <fullName evidence="1">tRNA-guanine transglycosylase</fullName>
    </alternativeName>
</protein>
<dbReference type="EC" id="2.4.2.29" evidence="1"/>
<dbReference type="EMBL" id="CR378665">
    <property type="protein sequence ID" value="CAG19156.1"/>
    <property type="molecule type" value="Genomic_DNA"/>
</dbReference>
<dbReference type="RefSeq" id="WP_011217499.1">
    <property type="nucleotide sequence ID" value="NC_006370.1"/>
</dbReference>
<dbReference type="SMR" id="Q6LU69"/>
<dbReference type="STRING" id="298386.PBPRA0743"/>
<dbReference type="KEGG" id="ppr:PBPRA0743"/>
<dbReference type="eggNOG" id="COG0343">
    <property type="taxonomic scope" value="Bacteria"/>
</dbReference>
<dbReference type="HOGENOM" id="CLU_022060_0_1_6"/>
<dbReference type="UniPathway" id="UPA00392"/>
<dbReference type="Proteomes" id="UP000000593">
    <property type="component" value="Chromosome 1"/>
</dbReference>
<dbReference type="GO" id="GO:0005829">
    <property type="term" value="C:cytosol"/>
    <property type="evidence" value="ECO:0007669"/>
    <property type="project" value="TreeGrafter"/>
</dbReference>
<dbReference type="GO" id="GO:0046872">
    <property type="term" value="F:metal ion binding"/>
    <property type="evidence" value="ECO:0007669"/>
    <property type="project" value="UniProtKB-KW"/>
</dbReference>
<dbReference type="GO" id="GO:0008479">
    <property type="term" value="F:tRNA-guanosine(34) queuine transglycosylase activity"/>
    <property type="evidence" value="ECO:0007669"/>
    <property type="project" value="UniProtKB-UniRule"/>
</dbReference>
<dbReference type="GO" id="GO:0008616">
    <property type="term" value="P:queuosine biosynthetic process"/>
    <property type="evidence" value="ECO:0007669"/>
    <property type="project" value="UniProtKB-UniRule"/>
</dbReference>
<dbReference type="GO" id="GO:0002099">
    <property type="term" value="P:tRNA wobble guanine modification"/>
    <property type="evidence" value="ECO:0007669"/>
    <property type="project" value="TreeGrafter"/>
</dbReference>
<dbReference type="GO" id="GO:0101030">
    <property type="term" value="P:tRNA-guanine transglycosylation"/>
    <property type="evidence" value="ECO:0007669"/>
    <property type="project" value="InterPro"/>
</dbReference>
<dbReference type="FunFam" id="3.20.20.105:FF:000001">
    <property type="entry name" value="Queuine tRNA-ribosyltransferase"/>
    <property type="match status" value="1"/>
</dbReference>
<dbReference type="Gene3D" id="3.20.20.105">
    <property type="entry name" value="Queuine tRNA-ribosyltransferase-like"/>
    <property type="match status" value="1"/>
</dbReference>
<dbReference type="HAMAP" id="MF_00168">
    <property type="entry name" value="Q_tRNA_Tgt"/>
    <property type="match status" value="1"/>
</dbReference>
<dbReference type="InterPro" id="IPR050076">
    <property type="entry name" value="ArchSynthase1/Queuine_TRR"/>
</dbReference>
<dbReference type="InterPro" id="IPR004803">
    <property type="entry name" value="TGT"/>
</dbReference>
<dbReference type="InterPro" id="IPR036511">
    <property type="entry name" value="TGT-like_sf"/>
</dbReference>
<dbReference type="InterPro" id="IPR002616">
    <property type="entry name" value="tRNA_ribo_trans-like"/>
</dbReference>
<dbReference type="NCBIfam" id="TIGR00430">
    <property type="entry name" value="Q_tRNA_tgt"/>
    <property type="match status" value="1"/>
</dbReference>
<dbReference type="NCBIfam" id="TIGR00449">
    <property type="entry name" value="tgt_general"/>
    <property type="match status" value="1"/>
</dbReference>
<dbReference type="PANTHER" id="PTHR46499">
    <property type="entry name" value="QUEUINE TRNA-RIBOSYLTRANSFERASE"/>
    <property type="match status" value="1"/>
</dbReference>
<dbReference type="PANTHER" id="PTHR46499:SF1">
    <property type="entry name" value="QUEUINE TRNA-RIBOSYLTRANSFERASE"/>
    <property type="match status" value="1"/>
</dbReference>
<dbReference type="Pfam" id="PF01702">
    <property type="entry name" value="TGT"/>
    <property type="match status" value="1"/>
</dbReference>
<dbReference type="SUPFAM" id="SSF51713">
    <property type="entry name" value="tRNA-guanine transglycosylase"/>
    <property type="match status" value="1"/>
</dbReference>
<evidence type="ECO:0000255" key="1">
    <source>
        <dbReference type="HAMAP-Rule" id="MF_00168"/>
    </source>
</evidence>
<gene>
    <name evidence="1" type="primary">tgt</name>
    <name type="ordered locus">PBPRA0743</name>
</gene>
<organism>
    <name type="scientific">Photobacterium profundum (strain SS9)</name>
    <dbReference type="NCBI Taxonomy" id="298386"/>
    <lineage>
        <taxon>Bacteria</taxon>
        <taxon>Pseudomonadati</taxon>
        <taxon>Pseudomonadota</taxon>
        <taxon>Gammaproteobacteria</taxon>
        <taxon>Vibrionales</taxon>
        <taxon>Vibrionaceae</taxon>
        <taxon>Photobacterium</taxon>
    </lineage>
</organism>
<keyword id="KW-0328">Glycosyltransferase</keyword>
<keyword id="KW-0479">Metal-binding</keyword>
<keyword id="KW-0671">Queuosine biosynthesis</keyword>
<keyword id="KW-1185">Reference proteome</keyword>
<keyword id="KW-0808">Transferase</keyword>
<keyword id="KW-0819">tRNA processing</keyword>
<keyword id="KW-0862">Zinc</keyword>
<proteinExistence type="inferred from homology"/>
<comment type="function">
    <text evidence="1">Catalyzes the base-exchange of a guanine (G) residue with the queuine precursor 7-aminomethyl-7-deazaguanine (PreQ1) at position 34 (anticodon wobble position) in tRNAs with GU(N) anticodons (tRNA-Asp, -Asn, -His and -Tyr). Catalysis occurs through a double-displacement mechanism. The nucleophile active site attacks the C1' of nucleotide 34 to detach the guanine base from the RNA, forming a covalent enzyme-RNA intermediate. The proton acceptor active site deprotonates the incoming PreQ1, allowing a nucleophilic attack on the C1' of the ribose to form the product. After dissociation, two additional enzymatic reactions on the tRNA convert PreQ1 to queuine (Q), resulting in the hypermodified nucleoside queuosine (7-(((4,5-cis-dihydroxy-2-cyclopenten-1-yl)amino)methyl)-7-deazaguanosine).</text>
</comment>
<comment type="catalytic activity">
    <reaction evidence="1">
        <text>7-aminomethyl-7-carbaguanine + guanosine(34) in tRNA = 7-aminomethyl-7-carbaguanosine(34) in tRNA + guanine</text>
        <dbReference type="Rhea" id="RHEA:24104"/>
        <dbReference type="Rhea" id="RHEA-COMP:10341"/>
        <dbReference type="Rhea" id="RHEA-COMP:10342"/>
        <dbReference type="ChEBI" id="CHEBI:16235"/>
        <dbReference type="ChEBI" id="CHEBI:58703"/>
        <dbReference type="ChEBI" id="CHEBI:74269"/>
        <dbReference type="ChEBI" id="CHEBI:82833"/>
        <dbReference type="EC" id="2.4.2.29"/>
    </reaction>
</comment>
<comment type="cofactor">
    <cofactor evidence="1">
        <name>Zn(2+)</name>
        <dbReference type="ChEBI" id="CHEBI:29105"/>
    </cofactor>
    <text evidence="1">Binds 1 zinc ion per subunit.</text>
</comment>
<comment type="pathway">
    <text evidence="1">tRNA modification; tRNA-queuosine biosynthesis.</text>
</comment>
<comment type="subunit">
    <text evidence="1">Homodimer. Within each dimer, one monomer is responsible for RNA recognition and catalysis, while the other monomer binds to the replacement base PreQ1.</text>
</comment>
<comment type="similarity">
    <text evidence="1">Belongs to the queuine tRNA-ribosyltransferase family.</text>
</comment>
<sequence length="375" mass="42741">MKFELDKTQGRARRGRLQFERGTVETPAFMPVGTYGTVKGMTPEEVKETGAQILLGNTFHLWLRPGQEVMKLHGDLHDFMQWHGPILTDSGGFQVFSLGATRKITEEGVHFRNPVNGDKVFMDAEKSMEIQYDLGSDIVMIFDECTPYPATHDEAKKSMEMSLRWAQRSRNHFDKQENPNALFGIIQGGVYEDLRDVSVDGLTNIGFDGYAVGGLAVGEPKEDMHRILEHTCPQLPEDKPRYLMGVGKPEDLVEGVRRGIDMFDCVMPTRNARNGHLFVTGGVIKIRNAKHKTDTTPLDPHCDCYTCLNYSKAYLYHLDKCNEILGSRLNTIHNLRYYQRLMASIRSAIEEDRFDVFVEEFYARRDREVPPLKNA</sequence>
<feature type="chain" id="PRO_0000135502" description="Queuine tRNA-ribosyltransferase">
    <location>
        <begin position="1"/>
        <end position="375"/>
    </location>
</feature>
<feature type="region of interest" description="RNA binding" evidence="1">
    <location>
        <begin position="245"/>
        <end position="251"/>
    </location>
</feature>
<feature type="region of interest" description="RNA binding; important for wobble base 34 recognition" evidence="1">
    <location>
        <begin position="269"/>
        <end position="273"/>
    </location>
</feature>
<feature type="active site" description="Proton acceptor" evidence="1">
    <location>
        <position position="89"/>
    </location>
</feature>
<feature type="active site" description="Nucleophile" evidence="1">
    <location>
        <position position="264"/>
    </location>
</feature>
<feature type="binding site" evidence="1">
    <location>
        <begin position="89"/>
        <end position="93"/>
    </location>
    <ligand>
        <name>substrate</name>
    </ligand>
</feature>
<feature type="binding site" evidence="1">
    <location>
        <position position="143"/>
    </location>
    <ligand>
        <name>substrate</name>
    </ligand>
</feature>
<feature type="binding site" evidence="1">
    <location>
        <position position="187"/>
    </location>
    <ligand>
        <name>substrate</name>
    </ligand>
</feature>
<feature type="binding site" evidence="1">
    <location>
        <position position="214"/>
    </location>
    <ligand>
        <name>substrate</name>
    </ligand>
</feature>
<feature type="binding site" evidence="1">
    <location>
        <position position="302"/>
    </location>
    <ligand>
        <name>Zn(2+)</name>
        <dbReference type="ChEBI" id="CHEBI:29105"/>
    </ligand>
</feature>
<feature type="binding site" evidence="1">
    <location>
        <position position="304"/>
    </location>
    <ligand>
        <name>Zn(2+)</name>
        <dbReference type="ChEBI" id="CHEBI:29105"/>
    </ligand>
</feature>
<feature type="binding site" evidence="1">
    <location>
        <position position="307"/>
    </location>
    <ligand>
        <name>Zn(2+)</name>
        <dbReference type="ChEBI" id="CHEBI:29105"/>
    </ligand>
</feature>
<feature type="binding site" evidence="1">
    <location>
        <position position="333"/>
    </location>
    <ligand>
        <name>Zn(2+)</name>
        <dbReference type="ChEBI" id="CHEBI:29105"/>
    </ligand>
</feature>
<accession>Q6LU69</accession>
<reference key="1">
    <citation type="journal article" date="2005" name="Science">
        <title>Life at depth: Photobacterium profundum genome sequence and expression analysis.</title>
        <authorList>
            <person name="Vezzi A."/>
            <person name="Campanaro S."/>
            <person name="D'Angelo M."/>
            <person name="Simonato F."/>
            <person name="Vitulo N."/>
            <person name="Lauro F.M."/>
            <person name="Cestaro A."/>
            <person name="Malacrida G."/>
            <person name="Simionati B."/>
            <person name="Cannata N."/>
            <person name="Romualdi C."/>
            <person name="Bartlett D.H."/>
            <person name="Valle G."/>
        </authorList>
    </citation>
    <scope>NUCLEOTIDE SEQUENCE [LARGE SCALE GENOMIC DNA]</scope>
    <source>
        <strain>ATCC BAA-1253 / SS9</strain>
    </source>
</reference>